<keyword id="KW-0325">Glycoprotein</keyword>
<keyword id="KW-0433">Leucine-rich repeat</keyword>
<keyword id="KW-0472">Membrane</keyword>
<keyword id="KW-1185">Reference proteome</keyword>
<keyword id="KW-0677">Repeat</keyword>
<keyword id="KW-0732">Signal</keyword>
<keyword id="KW-0812">Transmembrane</keyword>
<keyword id="KW-1133">Transmembrane helix</keyword>
<comment type="subcellular location">
    <subcellularLocation>
        <location evidence="2">Membrane</location>
        <topology evidence="2">Single-pass membrane protein</topology>
    </subcellularLocation>
</comment>
<comment type="similarity">
    <text evidence="2">Belongs to the LRRC3 family.</text>
</comment>
<dbReference type="EMBL" id="BC146155">
    <property type="protein sequence ID" value="AAI46156.1"/>
    <property type="molecule type" value="mRNA"/>
</dbReference>
<dbReference type="RefSeq" id="NP_001092865.1">
    <property type="nucleotide sequence ID" value="NM_001099395.1"/>
</dbReference>
<dbReference type="RefSeq" id="XP_024842086.1">
    <property type="nucleotide sequence ID" value="XM_024986318.2"/>
</dbReference>
<dbReference type="RefSeq" id="XP_024842087.1">
    <property type="nucleotide sequence ID" value="XM_024986319.2"/>
</dbReference>
<dbReference type="RefSeq" id="XP_024842088.1">
    <property type="nucleotide sequence ID" value="XM_024986320.2"/>
</dbReference>
<dbReference type="RefSeq" id="XP_059738292.1">
    <property type="nucleotide sequence ID" value="XM_059882309.1"/>
</dbReference>
<dbReference type="RefSeq" id="XP_059738293.1">
    <property type="nucleotide sequence ID" value="XM_059882310.1"/>
</dbReference>
<dbReference type="RefSeq" id="XP_059738294.1">
    <property type="nucleotide sequence ID" value="XM_059882311.1"/>
</dbReference>
<dbReference type="SMR" id="A6H789"/>
<dbReference type="FunCoup" id="A6H789">
    <property type="interactions" value="363"/>
</dbReference>
<dbReference type="STRING" id="9913.ENSBTAP00000044315"/>
<dbReference type="GlyCosmos" id="A6H789">
    <property type="glycosylation" value="2 sites, No reported glycans"/>
</dbReference>
<dbReference type="GlyGen" id="A6H789">
    <property type="glycosylation" value="2 sites"/>
</dbReference>
<dbReference type="PaxDb" id="9913-ENSBTAP00000044315"/>
<dbReference type="Ensembl" id="ENSBTAT00000047081.3">
    <property type="protein sequence ID" value="ENSBTAP00000044315.1"/>
    <property type="gene ID" value="ENSBTAG00000033140.3"/>
</dbReference>
<dbReference type="Ensembl" id="ENSBTAT00000089340.1">
    <property type="protein sequence ID" value="ENSBTAP00000093680.1"/>
    <property type="gene ID" value="ENSBTAG00000033140.3"/>
</dbReference>
<dbReference type="Ensembl" id="ENSBTAT00000103319.1">
    <property type="protein sequence ID" value="ENSBTAP00000086637.1"/>
    <property type="gene ID" value="ENSBTAG00000033140.3"/>
</dbReference>
<dbReference type="Ensembl" id="ENSBTAT00000104560.1">
    <property type="protein sequence ID" value="ENSBTAP00000088059.1"/>
    <property type="gene ID" value="ENSBTAG00000033140.3"/>
</dbReference>
<dbReference type="Ensembl" id="ENSBTAT00000109108.1">
    <property type="protein sequence ID" value="ENSBTAP00000092414.1"/>
    <property type="gene ID" value="ENSBTAG00000033140.3"/>
</dbReference>
<dbReference type="Ensembl" id="ENSBTAT00000109629.1">
    <property type="protein sequence ID" value="ENSBTAP00000102743.1"/>
    <property type="gene ID" value="ENSBTAG00000033140.3"/>
</dbReference>
<dbReference type="Ensembl" id="ENSBTAT00000113872.1">
    <property type="protein sequence ID" value="ENSBTAP00000101322.1"/>
    <property type="gene ID" value="ENSBTAG00000033140.3"/>
</dbReference>
<dbReference type="Ensembl" id="ENSBTAT00000116840.1">
    <property type="protein sequence ID" value="ENSBTAP00000083045.1"/>
    <property type="gene ID" value="ENSBTAG00000033140.3"/>
</dbReference>
<dbReference type="Ensembl" id="ENSBTAT00000117622.1">
    <property type="protein sequence ID" value="ENSBTAP00000077108.1"/>
    <property type="gene ID" value="ENSBTAG00000033140.3"/>
</dbReference>
<dbReference type="Ensembl" id="ENSBTAT00000118525.1">
    <property type="protein sequence ID" value="ENSBTAP00000076918.1"/>
    <property type="gene ID" value="ENSBTAG00000033140.3"/>
</dbReference>
<dbReference type="GeneID" id="783571"/>
<dbReference type="KEGG" id="bta:783571"/>
<dbReference type="CTD" id="116135"/>
<dbReference type="VEuPathDB" id="HostDB:ENSBTAG00000033140"/>
<dbReference type="VGNC" id="VGNC:52799">
    <property type="gene designation" value="LRRC3B"/>
</dbReference>
<dbReference type="eggNOG" id="KOG4237">
    <property type="taxonomic scope" value="Eukaryota"/>
</dbReference>
<dbReference type="GeneTree" id="ENSGT00940000157780"/>
<dbReference type="HOGENOM" id="CLU_064640_0_0_1"/>
<dbReference type="InParanoid" id="A6H789"/>
<dbReference type="OMA" id="PKGCACQ"/>
<dbReference type="OrthoDB" id="10068119at2759"/>
<dbReference type="TreeFam" id="TF327070"/>
<dbReference type="Proteomes" id="UP000009136">
    <property type="component" value="Chromosome 27"/>
</dbReference>
<dbReference type="Bgee" id="ENSBTAG00000033140">
    <property type="expression patterns" value="Expressed in granulosa cell and 95 other cell types or tissues"/>
</dbReference>
<dbReference type="GO" id="GO:0031012">
    <property type="term" value="C:extracellular matrix"/>
    <property type="evidence" value="ECO:0000318"/>
    <property type="project" value="GO_Central"/>
</dbReference>
<dbReference type="GO" id="GO:0005615">
    <property type="term" value="C:extracellular space"/>
    <property type="evidence" value="ECO:0000318"/>
    <property type="project" value="GO_Central"/>
</dbReference>
<dbReference type="GO" id="GO:0016020">
    <property type="term" value="C:membrane"/>
    <property type="evidence" value="ECO:0007669"/>
    <property type="project" value="UniProtKB-SubCell"/>
</dbReference>
<dbReference type="FunFam" id="3.80.10.10:FF:000069">
    <property type="entry name" value="leucine-rich repeat-containing protein 3B"/>
    <property type="match status" value="1"/>
</dbReference>
<dbReference type="Gene3D" id="3.80.10.10">
    <property type="entry name" value="Ribonuclease Inhibitor"/>
    <property type="match status" value="1"/>
</dbReference>
<dbReference type="InterPro" id="IPR001611">
    <property type="entry name" value="Leu-rich_rpt"/>
</dbReference>
<dbReference type="InterPro" id="IPR003591">
    <property type="entry name" value="Leu-rich_rpt_typical-subtyp"/>
</dbReference>
<dbReference type="InterPro" id="IPR032675">
    <property type="entry name" value="LRR_dom_sf"/>
</dbReference>
<dbReference type="InterPro" id="IPR000372">
    <property type="entry name" value="LRRNT"/>
</dbReference>
<dbReference type="PANTHER" id="PTHR24366">
    <property type="entry name" value="IG(IMMUNOGLOBULIN) AND LRR(LEUCINE RICH REPEAT) DOMAINS"/>
    <property type="match status" value="1"/>
</dbReference>
<dbReference type="PANTHER" id="PTHR24366:SF96">
    <property type="entry name" value="LEUCINE RICH REPEAT CONTAINING 53"/>
    <property type="match status" value="1"/>
</dbReference>
<dbReference type="Pfam" id="PF00560">
    <property type="entry name" value="LRR_1"/>
    <property type="match status" value="1"/>
</dbReference>
<dbReference type="Pfam" id="PF13855">
    <property type="entry name" value="LRR_8"/>
    <property type="match status" value="1"/>
</dbReference>
<dbReference type="Pfam" id="PF01462">
    <property type="entry name" value="LRRNT"/>
    <property type="match status" value="1"/>
</dbReference>
<dbReference type="SMART" id="SM00369">
    <property type="entry name" value="LRR_TYP"/>
    <property type="match status" value="3"/>
</dbReference>
<dbReference type="SMART" id="SM00013">
    <property type="entry name" value="LRRNT"/>
    <property type="match status" value="1"/>
</dbReference>
<dbReference type="SUPFAM" id="SSF52058">
    <property type="entry name" value="L domain-like"/>
    <property type="match status" value="1"/>
</dbReference>
<dbReference type="PROSITE" id="PS51450">
    <property type="entry name" value="LRR"/>
    <property type="match status" value="3"/>
</dbReference>
<proteinExistence type="evidence at transcript level"/>
<organism>
    <name type="scientific">Bos taurus</name>
    <name type="common">Bovine</name>
    <dbReference type="NCBI Taxonomy" id="9913"/>
    <lineage>
        <taxon>Eukaryota</taxon>
        <taxon>Metazoa</taxon>
        <taxon>Chordata</taxon>
        <taxon>Craniata</taxon>
        <taxon>Vertebrata</taxon>
        <taxon>Euteleostomi</taxon>
        <taxon>Mammalia</taxon>
        <taxon>Eutheria</taxon>
        <taxon>Laurasiatheria</taxon>
        <taxon>Artiodactyla</taxon>
        <taxon>Ruminantia</taxon>
        <taxon>Pecora</taxon>
        <taxon>Bovidae</taxon>
        <taxon>Bovinae</taxon>
        <taxon>Bos</taxon>
    </lineage>
</organism>
<feature type="signal peptide" evidence="1">
    <location>
        <begin position="1"/>
        <end position="33"/>
    </location>
</feature>
<feature type="chain" id="PRO_0000345965" description="Leucine-rich repeat-containing protein 3B">
    <location>
        <begin position="34"/>
        <end position="259"/>
    </location>
</feature>
<feature type="transmembrane region" description="Helical" evidence="1">
    <location>
        <begin position="205"/>
        <end position="225"/>
    </location>
</feature>
<feature type="domain" description="LRRNT">
    <location>
        <begin position="34"/>
        <end position="64"/>
    </location>
</feature>
<feature type="repeat" description="LRR 1">
    <location>
        <begin position="65"/>
        <end position="86"/>
    </location>
</feature>
<feature type="repeat" description="LRR 2">
    <location>
        <begin position="89"/>
        <end position="110"/>
    </location>
</feature>
<feature type="repeat" description="LRR 3">
    <location>
        <begin position="114"/>
        <end position="135"/>
    </location>
</feature>
<feature type="domain" description="LRRCT">
    <location>
        <begin position="145"/>
        <end position="197"/>
    </location>
</feature>
<feature type="glycosylation site" description="N-linked (GlcNAc...) asparagine" evidence="1">
    <location>
        <position position="47"/>
    </location>
</feature>
<feature type="glycosylation site" description="N-linked (GlcNAc...) asparagine" evidence="1">
    <location>
        <position position="94"/>
    </location>
</feature>
<sequence length="259" mass="29303">MNLVDLWLTRSLSMCLLLQSFVLMILCFHSASMCPKGCLCSSSGGLNVTCSNANLKEIPRDLPPETVLLYLDSNQITSIPNEIFKDLHQLRVLNLSKNGIEFIDEHAFKGVAETLQTLDLSDNRIQSVHKNAFNNLKARARIANNPWHCDCTLQQVLRSMVSNHETAHNVICKTSVLDEHAGRPFLNAANDADLCNLPKKTTDYAMLVTMFGWFTMVISYVVYYVRQNQEDARRHLEYLKSLPSRQKKADEPDDISTVV</sequence>
<accession>A6H789</accession>
<evidence type="ECO:0000255" key="1"/>
<evidence type="ECO:0000305" key="2"/>
<gene>
    <name type="primary">LRRC3B</name>
</gene>
<protein>
    <recommendedName>
        <fullName>Leucine-rich repeat-containing protein 3B</fullName>
    </recommendedName>
</protein>
<name>LRC3B_BOVIN</name>
<reference key="1">
    <citation type="submission" date="2007-06" db="EMBL/GenBank/DDBJ databases">
        <authorList>
            <consortium name="NIH - Mammalian Gene Collection (MGC) project"/>
        </authorList>
    </citation>
    <scope>NUCLEOTIDE SEQUENCE [LARGE SCALE MRNA]</scope>
    <source>
        <strain>Hereford</strain>
        <tissue>Hypothalamus</tissue>
    </source>
</reference>